<reference key="1">
    <citation type="submission" date="2007-06" db="EMBL/GenBank/DDBJ databases">
        <authorList>
            <person name="Brinkac L.M."/>
            <person name="Daugherty S."/>
            <person name="Dodson R.J."/>
            <person name="Madupu R."/>
            <person name="Brown J.L."/>
            <person name="Bruce D."/>
            <person name="Detter C."/>
            <person name="Munk C."/>
            <person name="Smith L.A."/>
            <person name="Smith T.J."/>
            <person name="White O."/>
            <person name="Brettin T.S."/>
        </authorList>
    </citation>
    <scope>NUCLEOTIDE SEQUENCE [LARGE SCALE GENOMIC DNA]</scope>
    <source>
        <strain>Langeland / NCTC 10281 / Type F</strain>
    </source>
</reference>
<dbReference type="EMBL" id="CP000728">
    <property type="protein sequence ID" value="ABS41498.1"/>
    <property type="molecule type" value="Genomic_DNA"/>
</dbReference>
<dbReference type="RefSeq" id="WP_003362578.1">
    <property type="nucleotide sequence ID" value="NC_009699.1"/>
</dbReference>
<dbReference type="SMR" id="A7GG23"/>
<dbReference type="GeneID" id="5186690"/>
<dbReference type="KEGG" id="cbf:CLI_2491"/>
<dbReference type="HOGENOM" id="CLU_040318_1_2_9"/>
<dbReference type="Proteomes" id="UP000002410">
    <property type="component" value="Chromosome"/>
</dbReference>
<dbReference type="GO" id="GO:0022627">
    <property type="term" value="C:cytosolic small ribosomal subunit"/>
    <property type="evidence" value="ECO:0007669"/>
    <property type="project" value="TreeGrafter"/>
</dbReference>
<dbReference type="GO" id="GO:0003735">
    <property type="term" value="F:structural constituent of ribosome"/>
    <property type="evidence" value="ECO:0007669"/>
    <property type="project" value="InterPro"/>
</dbReference>
<dbReference type="GO" id="GO:0006412">
    <property type="term" value="P:translation"/>
    <property type="evidence" value="ECO:0007669"/>
    <property type="project" value="UniProtKB-UniRule"/>
</dbReference>
<dbReference type="CDD" id="cd01425">
    <property type="entry name" value="RPS2"/>
    <property type="match status" value="1"/>
</dbReference>
<dbReference type="FunFam" id="1.10.287.610:FF:000001">
    <property type="entry name" value="30S ribosomal protein S2"/>
    <property type="match status" value="1"/>
</dbReference>
<dbReference type="Gene3D" id="3.40.50.10490">
    <property type="entry name" value="Glucose-6-phosphate isomerase like protein, domain 1"/>
    <property type="match status" value="1"/>
</dbReference>
<dbReference type="Gene3D" id="1.10.287.610">
    <property type="entry name" value="Helix hairpin bin"/>
    <property type="match status" value="1"/>
</dbReference>
<dbReference type="HAMAP" id="MF_00291_B">
    <property type="entry name" value="Ribosomal_uS2_B"/>
    <property type="match status" value="1"/>
</dbReference>
<dbReference type="InterPro" id="IPR001865">
    <property type="entry name" value="Ribosomal_uS2"/>
</dbReference>
<dbReference type="InterPro" id="IPR005706">
    <property type="entry name" value="Ribosomal_uS2_bac/mit/plastid"/>
</dbReference>
<dbReference type="InterPro" id="IPR018130">
    <property type="entry name" value="Ribosomal_uS2_CS"/>
</dbReference>
<dbReference type="InterPro" id="IPR023591">
    <property type="entry name" value="Ribosomal_uS2_flav_dom_sf"/>
</dbReference>
<dbReference type="NCBIfam" id="TIGR01011">
    <property type="entry name" value="rpsB_bact"/>
    <property type="match status" value="1"/>
</dbReference>
<dbReference type="PANTHER" id="PTHR12534">
    <property type="entry name" value="30S RIBOSOMAL PROTEIN S2 PROKARYOTIC AND ORGANELLAR"/>
    <property type="match status" value="1"/>
</dbReference>
<dbReference type="PANTHER" id="PTHR12534:SF0">
    <property type="entry name" value="SMALL RIBOSOMAL SUBUNIT PROTEIN US2M"/>
    <property type="match status" value="1"/>
</dbReference>
<dbReference type="Pfam" id="PF00318">
    <property type="entry name" value="Ribosomal_S2"/>
    <property type="match status" value="1"/>
</dbReference>
<dbReference type="PRINTS" id="PR00395">
    <property type="entry name" value="RIBOSOMALS2"/>
</dbReference>
<dbReference type="SUPFAM" id="SSF52313">
    <property type="entry name" value="Ribosomal protein S2"/>
    <property type="match status" value="1"/>
</dbReference>
<dbReference type="PROSITE" id="PS00962">
    <property type="entry name" value="RIBOSOMAL_S2_1"/>
    <property type="match status" value="1"/>
</dbReference>
<accession>A7GG23</accession>
<comment type="similarity">
    <text evidence="1">Belongs to the universal ribosomal protein uS2 family.</text>
</comment>
<protein>
    <recommendedName>
        <fullName evidence="1">Small ribosomal subunit protein uS2</fullName>
    </recommendedName>
    <alternativeName>
        <fullName evidence="2">30S ribosomal protein S2</fullName>
    </alternativeName>
</protein>
<organism>
    <name type="scientific">Clostridium botulinum (strain Langeland / NCTC 10281 / Type F)</name>
    <dbReference type="NCBI Taxonomy" id="441772"/>
    <lineage>
        <taxon>Bacteria</taxon>
        <taxon>Bacillati</taxon>
        <taxon>Bacillota</taxon>
        <taxon>Clostridia</taxon>
        <taxon>Eubacteriales</taxon>
        <taxon>Clostridiaceae</taxon>
        <taxon>Clostridium</taxon>
    </lineage>
</organism>
<keyword id="KW-0687">Ribonucleoprotein</keyword>
<keyword id="KW-0689">Ribosomal protein</keyword>
<feature type="chain" id="PRO_1000003935" description="Small ribosomal subunit protein uS2">
    <location>
        <begin position="1"/>
        <end position="233"/>
    </location>
</feature>
<evidence type="ECO:0000255" key="1">
    <source>
        <dbReference type="HAMAP-Rule" id="MF_00291"/>
    </source>
</evidence>
<evidence type="ECO:0000305" key="2"/>
<name>RS2_CLOBL</name>
<gene>
    <name evidence="1" type="primary">rpsB</name>
    <name type="ordered locus">CLI_2491</name>
</gene>
<proteinExistence type="inferred from homology"/>
<sequence length="233" mass="26396">MSVISMKQLLEAGVHFGHQTRRWNPKMAPYIFTERNGIYIIDLQKTVKKVEEAYNFLRSVAEEGKDVLFVGTKKQAQEAIEEEAKRSEMHFVNNRWLGGMLTNFTTITARINKLEELDKMEEDGTFEVLPKKEVIKLKNEREKLEKNLGGIRKLDANNVGAMFIVDPRKEKNAILEAKRLGIPVVAIVDTNCDPDEVDFVIPGNDDAIRAVRLIAAKMADAVLEGRQGEQLAE</sequence>